<keyword id="KW-0687">Ribonucleoprotein</keyword>
<keyword id="KW-0689">Ribosomal protein</keyword>
<evidence type="ECO:0000255" key="1">
    <source>
        <dbReference type="HAMAP-Rule" id="MF_00385"/>
    </source>
</evidence>
<evidence type="ECO:0000305" key="2"/>
<accession>B7GGE3</accession>
<proteinExistence type="inferred from homology"/>
<feature type="chain" id="PRO_1000196325" description="Small ribosomal subunit protein bS16">
    <location>
        <begin position="1"/>
        <end position="90"/>
    </location>
</feature>
<comment type="similarity">
    <text evidence="1">Belongs to the bacterial ribosomal protein bS16 family.</text>
</comment>
<dbReference type="EMBL" id="CP000922">
    <property type="protein sequence ID" value="ACJ34125.1"/>
    <property type="molecule type" value="Genomic_DNA"/>
</dbReference>
<dbReference type="RefSeq" id="WP_004891099.1">
    <property type="nucleotide sequence ID" value="NC_011567.1"/>
</dbReference>
<dbReference type="SMR" id="B7GGE3"/>
<dbReference type="STRING" id="491915.Aflv_1764"/>
<dbReference type="GeneID" id="7038017"/>
<dbReference type="KEGG" id="afl:Aflv_1764"/>
<dbReference type="eggNOG" id="COG0228">
    <property type="taxonomic scope" value="Bacteria"/>
</dbReference>
<dbReference type="HOGENOM" id="CLU_100590_5_0_9"/>
<dbReference type="Proteomes" id="UP000000742">
    <property type="component" value="Chromosome"/>
</dbReference>
<dbReference type="GO" id="GO:0005737">
    <property type="term" value="C:cytoplasm"/>
    <property type="evidence" value="ECO:0007669"/>
    <property type="project" value="UniProtKB-ARBA"/>
</dbReference>
<dbReference type="GO" id="GO:0015935">
    <property type="term" value="C:small ribosomal subunit"/>
    <property type="evidence" value="ECO:0007669"/>
    <property type="project" value="TreeGrafter"/>
</dbReference>
<dbReference type="GO" id="GO:0003735">
    <property type="term" value="F:structural constituent of ribosome"/>
    <property type="evidence" value="ECO:0007669"/>
    <property type="project" value="InterPro"/>
</dbReference>
<dbReference type="GO" id="GO:0006412">
    <property type="term" value="P:translation"/>
    <property type="evidence" value="ECO:0007669"/>
    <property type="project" value="UniProtKB-UniRule"/>
</dbReference>
<dbReference type="FunFam" id="3.30.1320.10:FF:000002">
    <property type="entry name" value="30S ribosomal protein S16"/>
    <property type="match status" value="1"/>
</dbReference>
<dbReference type="Gene3D" id="3.30.1320.10">
    <property type="match status" value="1"/>
</dbReference>
<dbReference type="HAMAP" id="MF_00385">
    <property type="entry name" value="Ribosomal_bS16"/>
    <property type="match status" value="1"/>
</dbReference>
<dbReference type="InterPro" id="IPR000307">
    <property type="entry name" value="Ribosomal_bS16"/>
</dbReference>
<dbReference type="InterPro" id="IPR020592">
    <property type="entry name" value="Ribosomal_bS16_CS"/>
</dbReference>
<dbReference type="InterPro" id="IPR023803">
    <property type="entry name" value="Ribosomal_bS16_dom_sf"/>
</dbReference>
<dbReference type="NCBIfam" id="TIGR00002">
    <property type="entry name" value="S16"/>
    <property type="match status" value="1"/>
</dbReference>
<dbReference type="PANTHER" id="PTHR12919">
    <property type="entry name" value="30S RIBOSOMAL PROTEIN S16"/>
    <property type="match status" value="1"/>
</dbReference>
<dbReference type="PANTHER" id="PTHR12919:SF20">
    <property type="entry name" value="SMALL RIBOSOMAL SUBUNIT PROTEIN BS16M"/>
    <property type="match status" value="1"/>
</dbReference>
<dbReference type="Pfam" id="PF00886">
    <property type="entry name" value="Ribosomal_S16"/>
    <property type="match status" value="1"/>
</dbReference>
<dbReference type="SUPFAM" id="SSF54565">
    <property type="entry name" value="Ribosomal protein S16"/>
    <property type="match status" value="1"/>
</dbReference>
<dbReference type="PROSITE" id="PS00732">
    <property type="entry name" value="RIBOSOMAL_S16"/>
    <property type="match status" value="1"/>
</dbReference>
<organism>
    <name type="scientific">Anoxybacillus flavithermus (strain DSM 21510 / WK1)</name>
    <dbReference type="NCBI Taxonomy" id="491915"/>
    <lineage>
        <taxon>Bacteria</taxon>
        <taxon>Bacillati</taxon>
        <taxon>Bacillota</taxon>
        <taxon>Bacilli</taxon>
        <taxon>Bacillales</taxon>
        <taxon>Anoxybacillaceae</taxon>
        <taxon>Anoxybacillus</taxon>
    </lineage>
</organism>
<sequence>MAVKIRLKRMGAKKSPFYRIVVADSRSPRDGRFIETIGTYNPLTEPAEIKINEELALKWLQNGAKPSDTVRNLLSKQGILEKFHNLKYGK</sequence>
<gene>
    <name evidence="1" type="primary">rpsP</name>
    <name type="ordered locus">Aflv_1764</name>
</gene>
<name>RS16_ANOFW</name>
<protein>
    <recommendedName>
        <fullName evidence="1">Small ribosomal subunit protein bS16</fullName>
    </recommendedName>
    <alternativeName>
        <fullName evidence="2">30S ribosomal protein S16</fullName>
    </alternativeName>
</protein>
<reference key="1">
    <citation type="journal article" date="2008" name="Genome Biol.">
        <title>Encapsulated in silica: genome, proteome and physiology of the thermophilic bacterium Anoxybacillus flavithermus WK1.</title>
        <authorList>
            <person name="Saw J.H."/>
            <person name="Mountain B.W."/>
            <person name="Feng L."/>
            <person name="Omelchenko M.V."/>
            <person name="Hou S."/>
            <person name="Saito J.A."/>
            <person name="Stott M.B."/>
            <person name="Li D."/>
            <person name="Zhao G."/>
            <person name="Wu J."/>
            <person name="Galperin M.Y."/>
            <person name="Koonin E.V."/>
            <person name="Makarova K.S."/>
            <person name="Wolf Y.I."/>
            <person name="Rigden D.J."/>
            <person name="Dunfield P.F."/>
            <person name="Wang L."/>
            <person name="Alam M."/>
        </authorList>
    </citation>
    <scope>NUCLEOTIDE SEQUENCE [LARGE SCALE GENOMIC DNA]</scope>
    <source>
        <strain>DSM 21510 / WK1</strain>
    </source>
</reference>